<proteinExistence type="inferred from homology"/>
<comment type="function">
    <text evidence="1">Catalyzes hydrolytic cleavage of carbon-halogen bonds in halogenated aliphatic compounds, leading to the formation of the corresponding primary alcohols, halide ions and protons.</text>
</comment>
<comment type="catalytic activity">
    <reaction>
        <text>1-haloalkane + H2O = a halide anion + a primary alcohol + H(+)</text>
        <dbReference type="Rhea" id="RHEA:19081"/>
        <dbReference type="ChEBI" id="CHEBI:15377"/>
        <dbReference type="ChEBI" id="CHEBI:15378"/>
        <dbReference type="ChEBI" id="CHEBI:15734"/>
        <dbReference type="ChEBI" id="CHEBI:16042"/>
        <dbReference type="ChEBI" id="CHEBI:18060"/>
        <dbReference type="EC" id="3.8.1.5"/>
    </reaction>
</comment>
<comment type="subunit">
    <text evidence="1">Monomer.</text>
</comment>
<comment type="similarity">
    <text evidence="3">Belongs to the haloalkane dehalogenase family. Type 1 subfamily.</text>
</comment>
<keyword id="KW-0378">Hydrolase</keyword>
<keyword id="KW-1185">Reference proteome</keyword>
<organism>
    <name type="scientific">Mycobacterium bovis (strain ATCC BAA-935 / AF2122/97)</name>
    <dbReference type="NCBI Taxonomy" id="233413"/>
    <lineage>
        <taxon>Bacteria</taxon>
        <taxon>Bacillati</taxon>
        <taxon>Actinomycetota</taxon>
        <taxon>Actinomycetes</taxon>
        <taxon>Mycobacteriales</taxon>
        <taxon>Mycobacteriaceae</taxon>
        <taxon>Mycobacterium</taxon>
        <taxon>Mycobacterium tuberculosis complex</taxon>
    </lineage>
</organism>
<protein>
    <recommendedName>
        <fullName>Haloalkane dehalogenase 1</fullName>
        <ecNumber>3.8.1.5</ecNumber>
    </recommendedName>
</protein>
<gene>
    <name type="primary">dhmA1</name>
    <name type="ordered locus">BQ2027_MB2318</name>
</gene>
<feature type="chain" id="PRO_0000216768" description="Haloalkane dehalogenase 1">
    <location>
        <begin position="1"/>
        <end position="300"/>
    </location>
</feature>
<feature type="domain" description="AB hydrolase-1" evidence="2">
    <location>
        <begin position="47"/>
        <end position="176"/>
    </location>
</feature>
<feature type="active site" description="Nucleophile" evidence="1">
    <location>
        <position position="123"/>
    </location>
</feature>
<feature type="active site" description="Proton donor" evidence="1">
    <location>
        <position position="250"/>
    </location>
</feature>
<feature type="active site" description="Proton acceptor" evidence="1">
    <location>
        <position position="279"/>
    </location>
</feature>
<reference key="1">
    <citation type="journal article" date="2003" name="Proc. Natl. Acad. Sci. U.S.A.">
        <title>The complete genome sequence of Mycobacterium bovis.</title>
        <authorList>
            <person name="Garnier T."/>
            <person name="Eiglmeier K."/>
            <person name="Camus J.-C."/>
            <person name="Medina N."/>
            <person name="Mansoor H."/>
            <person name="Pryor M."/>
            <person name="Duthoy S."/>
            <person name="Grondin S."/>
            <person name="Lacroix C."/>
            <person name="Monsempe C."/>
            <person name="Simon S."/>
            <person name="Harris B."/>
            <person name="Atkin R."/>
            <person name="Doggett J."/>
            <person name="Mayes R."/>
            <person name="Keating L."/>
            <person name="Wheeler P.R."/>
            <person name="Parkhill J."/>
            <person name="Barrell B.G."/>
            <person name="Cole S.T."/>
            <person name="Gordon S.V."/>
            <person name="Hewinson R.G."/>
        </authorList>
    </citation>
    <scope>NUCLEOTIDE SEQUENCE [LARGE SCALE GENOMIC DNA]</scope>
    <source>
        <strain>ATCC BAA-935 / AF2122/97</strain>
    </source>
</reference>
<reference key="2">
    <citation type="journal article" date="2017" name="Genome Announc.">
        <title>Updated reference genome sequence and annotation of Mycobacterium bovis AF2122/97.</title>
        <authorList>
            <person name="Malone K.M."/>
            <person name="Farrell D."/>
            <person name="Stuber T.P."/>
            <person name="Schubert O.T."/>
            <person name="Aebersold R."/>
            <person name="Robbe-Austerman S."/>
            <person name="Gordon S.V."/>
        </authorList>
    </citation>
    <scope>NUCLEOTIDE SEQUENCE [LARGE SCALE GENOMIC DNA]</scope>
    <scope>GENOME REANNOTATION</scope>
    <source>
        <strain>ATCC BAA-935 / AF2122/97</strain>
    </source>
</reference>
<accession>P64302</accession>
<accession>A0A1R3Y0U2</accession>
<accession>Q50670</accession>
<accession>X2BKN5</accession>
<sequence>MDVLRTPDSRFEHLVGYPFAPHYVDVTAGDTQPLRMHYVDEGPGDGPPIVLLHGEPTWSYLYRTMIPPLSAAGHRVLAPDLIGFGRSDKPTRIEDYTYLRHVEWVTSWFENLDLHDVTLFVQDWGSLIGLRIAAEHGDRIARLVVANGFLPAAQGRTPLPFYVWRAFARYSPVLPAGRLVNFGTVHRVPAGVRAGYDAPFPDKTYQAGARAFPRLVPTSPDDPAVPANRAAWEALGRWDKPFLAIFGYRDPILGQADGPLIKHIPGAAGQPHARIKASHFIQEDSGTELAERMLSWQQAT</sequence>
<name>DHMA1_MYCBO</name>
<dbReference type="EC" id="3.8.1.5"/>
<dbReference type="EMBL" id="LT708304">
    <property type="protein sequence ID" value="SIU00930.1"/>
    <property type="molecule type" value="Genomic_DNA"/>
</dbReference>
<dbReference type="RefSeq" id="NP_855967.1">
    <property type="nucleotide sequence ID" value="NC_002945.3"/>
</dbReference>
<dbReference type="RefSeq" id="WP_003411849.1">
    <property type="nucleotide sequence ID" value="NC_002945.4"/>
</dbReference>
<dbReference type="SMR" id="P64302"/>
<dbReference type="ESTHER" id="myctu-RV2296">
    <property type="family name" value="Haloalkane_dehalogenase-HLD1"/>
</dbReference>
<dbReference type="KEGG" id="mbo:BQ2027_MB2318"/>
<dbReference type="PATRIC" id="fig|233413.5.peg.2542"/>
<dbReference type="Proteomes" id="UP000001419">
    <property type="component" value="Chromosome"/>
</dbReference>
<dbReference type="GO" id="GO:0004301">
    <property type="term" value="F:epoxide hydrolase activity"/>
    <property type="evidence" value="ECO:0007669"/>
    <property type="project" value="TreeGrafter"/>
</dbReference>
<dbReference type="GO" id="GO:0018786">
    <property type="term" value="F:haloalkane dehalogenase activity"/>
    <property type="evidence" value="ECO:0007669"/>
    <property type="project" value="UniProtKB-UniRule"/>
</dbReference>
<dbReference type="FunFam" id="3.40.50.1820:FF:000325">
    <property type="entry name" value="Haloalkane dehalogenase"/>
    <property type="match status" value="1"/>
</dbReference>
<dbReference type="Gene3D" id="3.40.50.1820">
    <property type="entry name" value="alpha/beta hydrolase"/>
    <property type="match status" value="1"/>
</dbReference>
<dbReference type="HAMAP" id="MF_01230">
    <property type="entry name" value="Haloalk_dehal_type1"/>
    <property type="match status" value="1"/>
</dbReference>
<dbReference type="InterPro" id="IPR000073">
    <property type="entry name" value="AB_hydrolase_1"/>
</dbReference>
<dbReference type="InterPro" id="IPR029058">
    <property type="entry name" value="AB_hydrolase_fold"/>
</dbReference>
<dbReference type="InterPro" id="IPR000639">
    <property type="entry name" value="Epox_hydrolase-like"/>
</dbReference>
<dbReference type="InterPro" id="IPR051340">
    <property type="entry name" value="Haloalkane_dehalogenase"/>
</dbReference>
<dbReference type="InterPro" id="IPR023489">
    <property type="entry name" value="Haloalkane_dehalogenase_1"/>
</dbReference>
<dbReference type="NCBIfam" id="NF002043">
    <property type="entry name" value="PRK00870.1"/>
    <property type="match status" value="1"/>
</dbReference>
<dbReference type="PANTHER" id="PTHR42977:SF3">
    <property type="entry name" value="AB HYDROLASE-1 DOMAIN-CONTAINING PROTEIN"/>
    <property type="match status" value="1"/>
</dbReference>
<dbReference type="PANTHER" id="PTHR42977">
    <property type="entry name" value="HYDROLASE-RELATED"/>
    <property type="match status" value="1"/>
</dbReference>
<dbReference type="Pfam" id="PF00561">
    <property type="entry name" value="Abhydrolase_1"/>
    <property type="match status" value="1"/>
</dbReference>
<dbReference type="PRINTS" id="PR00111">
    <property type="entry name" value="ABHYDROLASE"/>
</dbReference>
<dbReference type="PRINTS" id="PR00412">
    <property type="entry name" value="EPOXHYDRLASE"/>
</dbReference>
<dbReference type="SUPFAM" id="SSF53474">
    <property type="entry name" value="alpha/beta-Hydrolases"/>
    <property type="match status" value="1"/>
</dbReference>
<evidence type="ECO:0000250" key="1"/>
<evidence type="ECO:0000255" key="2"/>
<evidence type="ECO:0000305" key="3"/>